<keyword id="KW-0067">ATP-binding</keyword>
<keyword id="KW-0963">Cytoplasm</keyword>
<keyword id="KW-0418">Kinase</keyword>
<keyword id="KW-0520">NAD</keyword>
<keyword id="KW-0521">NADP</keyword>
<keyword id="KW-0547">Nucleotide-binding</keyword>
<keyword id="KW-0808">Transferase</keyword>
<comment type="function">
    <text evidence="1">Involved in the regulation of the intracellular balance of NAD and NADP, and is a key enzyme in the biosynthesis of NADP. Catalyzes specifically the phosphorylation on 2'-hydroxyl of the adenosine moiety of NAD to yield NADP.</text>
</comment>
<comment type="catalytic activity">
    <reaction evidence="1">
        <text>NAD(+) + ATP = ADP + NADP(+) + H(+)</text>
        <dbReference type="Rhea" id="RHEA:18629"/>
        <dbReference type="ChEBI" id="CHEBI:15378"/>
        <dbReference type="ChEBI" id="CHEBI:30616"/>
        <dbReference type="ChEBI" id="CHEBI:57540"/>
        <dbReference type="ChEBI" id="CHEBI:58349"/>
        <dbReference type="ChEBI" id="CHEBI:456216"/>
        <dbReference type="EC" id="2.7.1.23"/>
    </reaction>
</comment>
<comment type="cofactor">
    <cofactor evidence="1">
        <name>a divalent metal cation</name>
        <dbReference type="ChEBI" id="CHEBI:60240"/>
    </cofactor>
</comment>
<comment type="subcellular location">
    <subcellularLocation>
        <location evidence="1">Cytoplasm</location>
    </subcellularLocation>
</comment>
<comment type="similarity">
    <text evidence="1">Belongs to the NAD kinase family.</text>
</comment>
<dbReference type="EC" id="2.7.1.23" evidence="1"/>
<dbReference type="EMBL" id="FM200053">
    <property type="protein sequence ID" value="CAR60598.1"/>
    <property type="molecule type" value="Genomic_DNA"/>
</dbReference>
<dbReference type="RefSeq" id="WP_001059155.1">
    <property type="nucleotide sequence ID" value="NC_011147.1"/>
</dbReference>
<dbReference type="SMR" id="B5BEA1"/>
<dbReference type="KEGG" id="sek:SSPA2367"/>
<dbReference type="HOGENOM" id="CLU_008831_0_1_6"/>
<dbReference type="Proteomes" id="UP000001869">
    <property type="component" value="Chromosome"/>
</dbReference>
<dbReference type="GO" id="GO:0005737">
    <property type="term" value="C:cytoplasm"/>
    <property type="evidence" value="ECO:0007669"/>
    <property type="project" value="UniProtKB-SubCell"/>
</dbReference>
<dbReference type="GO" id="GO:0005524">
    <property type="term" value="F:ATP binding"/>
    <property type="evidence" value="ECO:0007669"/>
    <property type="project" value="UniProtKB-KW"/>
</dbReference>
<dbReference type="GO" id="GO:0046872">
    <property type="term" value="F:metal ion binding"/>
    <property type="evidence" value="ECO:0007669"/>
    <property type="project" value="UniProtKB-UniRule"/>
</dbReference>
<dbReference type="GO" id="GO:0051287">
    <property type="term" value="F:NAD binding"/>
    <property type="evidence" value="ECO:0007669"/>
    <property type="project" value="UniProtKB-ARBA"/>
</dbReference>
<dbReference type="GO" id="GO:0003951">
    <property type="term" value="F:NAD+ kinase activity"/>
    <property type="evidence" value="ECO:0007669"/>
    <property type="project" value="UniProtKB-UniRule"/>
</dbReference>
<dbReference type="GO" id="GO:0019674">
    <property type="term" value="P:NAD metabolic process"/>
    <property type="evidence" value="ECO:0007669"/>
    <property type="project" value="InterPro"/>
</dbReference>
<dbReference type="GO" id="GO:0006741">
    <property type="term" value="P:NADP biosynthetic process"/>
    <property type="evidence" value="ECO:0007669"/>
    <property type="project" value="UniProtKB-UniRule"/>
</dbReference>
<dbReference type="FunFam" id="2.60.200.30:FF:000001">
    <property type="entry name" value="NAD kinase"/>
    <property type="match status" value="1"/>
</dbReference>
<dbReference type="FunFam" id="3.40.50.10330:FF:000004">
    <property type="entry name" value="NAD kinase"/>
    <property type="match status" value="1"/>
</dbReference>
<dbReference type="Gene3D" id="3.40.50.10330">
    <property type="entry name" value="Probable inorganic polyphosphate/atp-NAD kinase, domain 1"/>
    <property type="match status" value="1"/>
</dbReference>
<dbReference type="Gene3D" id="2.60.200.30">
    <property type="entry name" value="Probable inorganic polyphosphate/atp-NAD kinase, domain 2"/>
    <property type="match status" value="1"/>
</dbReference>
<dbReference type="HAMAP" id="MF_00361">
    <property type="entry name" value="NAD_kinase"/>
    <property type="match status" value="1"/>
</dbReference>
<dbReference type="InterPro" id="IPR017438">
    <property type="entry name" value="ATP-NAD_kinase_N"/>
</dbReference>
<dbReference type="InterPro" id="IPR017437">
    <property type="entry name" value="ATP-NAD_kinase_PpnK-typ_C"/>
</dbReference>
<dbReference type="InterPro" id="IPR016064">
    <property type="entry name" value="NAD/diacylglycerol_kinase_sf"/>
</dbReference>
<dbReference type="InterPro" id="IPR002504">
    <property type="entry name" value="NADK"/>
</dbReference>
<dbReference type="NCBIfam" id="NF002306">
    <property type="entry name" value="PRK01231.1"/>
    <property type="match status" value="1"/>
</dbReference>
<dbReference type="NCBIfam" id="NF002893">
    <property type="entry name" value="PRK03378.1"/>
    <property type="match status" value="1"/>
</dbReference>
<dbReference type="PANTHER" id="PTHR20275">
    <property type="entry name" value="NAD KINASE"/>
    <property type="match status" value="1"/>
</dbReference>
<dbReference type="PANTHER" id="PTHR20275:SF0">
    <property type="entry name" value="NAD KINASE"/>
    <property type="match status" value="1"/>
</dbReference>
<dbReference type="Pfam" id="PF01513">
    <property type="entry name" value="NAD_kinase"/>
    <property type="match status" value="1"/>
</dbReference>
<dbReference type="Pfam" id="PF20143">
    <property type="entry name" value="NAD_kinase_C"/>
    <property type="match status" value="1"/>
</dbReference>
<dbReference type="SUPFAM" id="SSF111331">
    <property type="entry name" value="NAD kinase/diacylglycerol kinase-like"/>
    <property type="match status" value="1"/>
</dbReference>
<accession>B5BEA1</accession>
<reference key="1">
    <citation type="journal article" date="2009" name="BMC Genomics">
        <title>Pseudogene accumulation in the evolutionary histories of Salmonella enterica serovars Paratyphi A and Typhi.</title>
        <authorList>
            <person name="Holt K.E."/>
            <person name="Thomson N.R."/>
            <person name="Wain J."/>
            <person name="Langridge G.C."/>
            <person name="Hasan R."/>
            <person name="Bhutta Z.A."/>
            <person name="Quail M.A."/>
            <person name="Norbertczak H."/>
            <person name="Walker D."/>
            <person name="Simmonds M."/>
            <person name="White B."/>
            <person name="Bason N."/>
            <person name="Mungall K."/>
            <person name="Dougan G."/>
            <person name="Parkhill J."/>
        </authorList>
    </citation>
    <scope>NUCLEOTIDE SEQUENCE [LARGE SCALE GENOMIC DNA]</scope>
    <source>
        <strain>AKU_12601</strain>
    </source>
</reference>
<name>NADK_SALPK</name>
<protein>
    <recommendedName>
        <fullName evidence="1">NAD kinase</fullName>
        <ecNumber evidence="1">2.7.1.23</ecNumber>
    </recommendedName>
    <alternativeName>
        <fullName evidence="1">ATP-dependent NAD kinase</fullName>
    </alternativeName>
</protein>
<gene>
    <name evidence="1" type="primary">nadK</name>
    <name type="ordered locus">SSPA2367</name>
</gene>
<feature type="chain" id="PRO_1000120886" description="NAD kinase">
    <location>
        <begin position="1"/>
        <end position="292"/>
    </location>
</feature>
<feature type="active site" description="Proton acceptor" evidence="1">
    <location>
        <position position="73"/>
    </location>
</feature>
<feature type="binding site" evidence="1">
    <location>
        <begin position="73"/>
        <end position="74"/>
    </location>
    <ligand>
        <name>NAD(+)</name>
        <dbReference type="ChEBI" id="CHEBI:57540"/>
    </ligand>
</feature>
<feature type="binding site" evidence="1">
    <location>
        <begin position="147"/>
        <end position="148"/>
    </location>
    <ligand>
        <name>NAD(+)</name>
        <dbReference type="ChEBI" id="CHEBI:57540"/>
    </ligand>
</feature>
<feature type="binding site" evidence="1">
    <location>
        <position position="158"/>
    </location>
    <ligand>
        <name>NAD(+)</name>
        <dbReference type="ChEBI" id="CHEBI:57540"/>
    </ligand>
</feature>
<feature type="binding site" evidence="1">
    <location>
        <position position="175"/>
    </location>
    <ligand>
        <name>NAD(+)</name>
        <dbReference type="ChEBI" id="CHEBI:57540"/>
    </ligand>
</feature>
<feature type="binding site" evidence="1">
    <location>
        <position position="177"/>
    </location>
    <ligand>
        <name>NAD(+)</name>
        <dbReference type="ChEBI" id="CHEBI:57540"/>
    </ligand>
</feature>
<feature type="binding site" evidence="1">
    <location>
        <begin position="188"/>
        <end position="193"/>
    </location>
    <ligand>
        <name>NAD(+)</name>
        <dbReference type="ChEBI" id="CHEBI:57540"/>
    </ligand>
</feature>
<feature type="binding site" evidence="1">
    <location>
        <position position="247"/>
    </location>
    <ligand>
        <name>NAD(+)</name>
        <dbReference type="ChEBI" id="CHEBI:57540"/>
    </ligand>
</feature>
<sequence>MNNHFKCIGIVGHPRHPTALTTHEMLYRWLCDQGYEVIVEQQIAHELQLKNVPTGTLAEIGQQADLAVVVGGDGNMLGAARTLARYDINVIGINRGNLGFLTDLDPDNALQQLSDVLEGRYISEKRFLLEAQVCQQDRQKRISTAINEVVLHPGKVAHMIEFEVYIDETFAFSQRSDGLIISTPTGSTAYSLSAGGPILTPSLDAITLVPMFPHTLSARPLVINSSSTIRLRFSHRRSDLEISCDSQIALPIQEGEDVLIRRCDYHLNLIHPKDYSYFNTLSTKLGWSKKLF</sequence>
<organism>
    <name type="scientific">Salmonella paratyphi A (strain AKU_12601)</name>
    <dbReference type="NCBI Taxonomy" id="554290"/>
    <lineage>
        <taxon>Bacteria</taxon>
        <taxon>Pseudomonadati</taxon>
        <taxon>Pseudomonadota</taxon>
        <taxon>Gammaproteobacteria</taxon>
        <taxon>Enterobacterales</taxon>
        <taxon>Enterobacteriaceae</taxon>
        <taxon>Salmonella</taxon>
    </lineage>
</organism>
<proteinExistence type="inferred from homology"/>
<evidence type="ECO:0000255" key="1">
    <source>
        <dbReference type="HAMAP-Rule" id="MF_00361"/>
    </source>
</evidence>